<name>AHPC_STAA3</name>
<sequence length="189" mass="20977">MSLINKEILPFTAQAFDPKKDQFKEVTQEDLKGSWSVVCFYPADFSFVCPTELEDLQNQYEELQKLGVNVFSVSTDTHFVHKAWHDHSDAISKITYTMIGDPSQTITRNFDVLDEATGLAQRGTFIIDPDGVVQASEINADGIGRDASTLAHKIKAAQYVRKNPGEVCPAKWEEGAKTLQPGLDLVGKI</sequence>
<accession>Q2FJN4</accession>
<evidence type="ECO:0000250" key="1">
    <source>
        <dbReference type="UniProtKB" id="P0A251"/>
    </source>
</evidence>
<evidence type="ECO:0000250" key="2">
    <source>
        <dbReference type="UniProtKB" id="P0AE08"/>
    </source>
</evidence>
<evidence type="ECO:0000255" key="3">
    <source>
        <dbReference type="PROSITE-ProRule" id="PRU00691"/>
    </source>
</evidence>
<evidence type="ECO:0000305" key="4"/>
<reference key="1">
    <citation type="journal article" date="2006" name="Lancet">
        <title>Complete genome sequence of USA300, an epidemic clone of community-acquired meticillin-resistant Staphylococcus aureus.</title>
        <authorList>
            <person name="Diep B.A."/>
            <person name="Gill S.R."/>
            <person name="Chang R.F."/>
            <person name="Phan T.H."/>
            <person name="Chen J.H."/>
            <person name="Davidson M.G."/>
            <person name="Lin F."/>
            <person name="Lin J."/>
            <person name="Carleton H.A."/>
            <person name="Mongodin E.F."/>
            <person name="Sensabaugh G.F."/>
            <person name="Perdreau-Remington F."/>
        </authorList>
    </citation>
    <scope>NUCLEOTIDE SEQUENCE [LARGE SCALE GENOMIC DNA]</scope>
    <source>
        <strain>USA300</strain>
    </source>
</reference>
<protein>
    <recommendedName>
        <fullName>Alkyl hydroperoxide reductase C</fullName>
        <ecNumber evidence="1">1.11.1.26</ecNumber>
    </recommendedName>
    <alternativeName>
        <fullName>Peroxiredoxin</fullName>
    </alternativeName>
    <alternativeName>
        <fullName>Thioredoxin peroxidase</fullName>
    </alternativeName>
</protein>
<gene>
    <name type="primary">ahpC</name>
    <name type="ordered locus">SAUSA300_0380</name>
</gene>
<proteinExistence type="inferred from homology"/>
<dbReference type="EC" id="1.11.1.26" evidence="1"/>
<dbReference type="EMBL" id="CP000255">
    <property type="protein sequence ID" value="ABD22688.1"/>
    <property type="molecule type" value="Genomic_DNA"/>
</dbReference>
<dbReference type="RefSeq" id="WP_000052781.1">
    <property type="nucleotide sequence ID" value="NZ_CP027476.1"/>
</dbReference>
<dbReference type="SMR" id="Q2FJN4"/>
<dbReference type="KEGG" id="saa:SAUSA300_0380"/>
<dbReference type="HOGENOM" id="CLU_042529_21_3_9"/>
<dbReference type="OMA" id="FWYPKDF"/>
<dbReference type="Proteomes" id="UP000001939">
    <property type="component" value="Chromosome"/>
</dbReference>
<dbReference type="GO" id="GO:0005829">
    <property type="term" value="C:cytosol"/>
    <property type="evidence" value="ECO:0007669"/>
    <property type="project" value="TreeGrafter"/>
</dbReference>
<dbReference type="GO" id="GO:0102039">
    <property type="term" value="F:NADH-dependent peroxiredoxin activity"/>
    <property type="evidence" value="ECO:0007669"/>
    <property type="project" value="UniProtKB-EC"/>
</dbReference>
<dbReference type="GO" id="GO:0008379">
    <property type="term" value="F:thioredoxin peroxidase activity"/>
    <property type="evidence" value="ECO:0007669"/>
    <property type="project" value="TreeGrafter"/>
</dbReference>
<dbReference type="GO" id="GO:0045454">
    <property type="term" value="P:cell redox homeostasis"/>
    <property type="evidence" value="ECO:0007669"/>
    <property type="project" value="TreeGrafter"/>
</dbReference>
<dbReference type="GO" id="GO:0033554">
    <property type="term" value="P:cellular response to stress"/>
    <property type="evidence" value="ECO:0007669"/>
    <property type="project" value="TreeGrafter"/>
</dbReference>
<dbReference type="GO" id="GO:0042744">
    <property type="term" value="P:hydrogen peroxide catabolic process"/>
    <property type="evidence" value="ECO:0007669"/>
    <property type="project" value="TreeGrafter"/>
</dbReference>
<dbReference type="GO" id="GO:0006979">
    <property type="term" value="P:response to oxidative stress"/>
    <property type="evidence" value="ECO:0007669"/>
    <property type="project" value="InterPro"/>
</dbReference>
<dbReference type="CDD" id="cd03015">
    <property type="entry name" value="PRX_Typ2cys"/>
    <property type="match status" value="1"/>
</dbReference>
<dbReference type="FunFam" id="3.40.30.10:FF:000002">
    <property type="entry name" value="Alkyl hydroperoxide reductase C"/>
    <property type="match status" value="1"/>
</dbReference>
<dbReference type="Gene3D" id="3.40.30.10">
    <property type="entry name" value="Glutaredoxin"/>
    <property type="match status" value="1"/>
</dbReference>
<dbReference type="InterPro" id="IPR017559">
    <property type="entry name" value="AhpC"/>
</dbReference>
<dbReference type="InterPro" id="IPR000866">
    <property type="entry name" value="AhpC/TSA"/>
</dbReference>
<dbReference type="InterPro" id="IPR050217">
    <property type="entry name" value="Peroxiredoxin"/>
</dbReference>
<dbReference type="InterPro" id="IPR024706">
    <property type="entry name" value="Peroxiredoxin_AhpC-typ"/>
</dbReference>
<dbReference type="InterPro" id="IPR019479">
    <property type="entry name" value="Peroxiredoxin_C"/>
</dbReference>
<dbReference type="InterPro" id="IPR036249">
    <property type="entry name" value="Thioredoxin-like_sf"/>
</dbReference>
<dbReference type="InterPro" id="IPR013766">
    <property type="entry name" value="Thioredoxin_domain"/>
</dbReference>
<dbReference type="NCBIfam" id="TIGR03137">
    <property type="entry name" value="AhpC"/>
    <property type="match status" value="1"/>
</dbReference>
<dbReference type="PANTHER" id="PTHR10681:SF121">
    <property type="entry name" value="ALKYL HYDROPEROXIDE REDUCTASE C"/>
    <property type="match status" value="1"/>
</dbReference>
<dbReference type="PANTHER" id="PTHR10681">
    <property type="entry name" value="THIOREDOXIN PEROXIDASE"/>
    <property type="match status" value="1"/>
</dbReference>
<dbReference type="Pfam" id="PF10417">
    <property type="entry name" value="1-cysPrx_C"/>
    <property type="match status" value="1"/>
</dbReference>
<dbReference type="Pfam" id="PF00578">
    <property type="entry name" value="AhpC-TSA"/>
    <property type="match status" value="1"/>
</dbReference>
<dbReference type="PIRSF" id="PIRSF000239">
    <property type="entry name" value="AHPC"/>
    <property type="match status" value="1"/>
</dbReference>
<dbReference type="SUPFAM" id="SSF52833">
    <property type="entry name" value="Thioredoxin-like"/>
    <property type="match status" value="1"/>
</dbReference>
<dbReference type="PROSITE" id="PS51352">
    <property type="entry name" value="THIOREDOXIN_2"/>
    <property type="match status" value="1"/>
</dbReference>
<comment type="function">
    <text evidence="1">Thiol-specific peroxidase that catalyzes the reduction of hydrogen peroxide and organic hydroperoxides to water and alcohols, respectively. Plays a role in cell protection against oxidative stress by detoxifying peroxides.</text>
</comment>
<comment type="catalytic activity">
    <reaction evidence="1">
        <text>a hydroperoxide + NADH + H(+) = an alcohol + NAD(+) + H2O</text>
        <dbReference type="Rhea" id="RHEA:62628"/>
        <dbReference type="ChEBI" id="CHEBI:15377"/>
        <dbReference type="ChEBI" id="CHEBI:15378"/>
        <dbReference type="ChEBI" id="CHEBI:30879"/>
        <dbReference type="ChEBI" id="CHEBI:35924"/>
        <dbReference type="ChEBI" id="CHEBI:57540"/>
        <dbReference type="ChEBI" id="CHEBI:57945"/>
        <dbReference type="EC" id="1.11.1.26"/>
    </reaction>
</comment>
<comment type="subunit">
    <text evidence="1">Homodimer; disulfide-linked, upon oxidation. 5 homodimers assemble to form a ring-like decamer.</text>
</comment>
<comment type="subcellular location">
    <subcellularLocation>
        <location evidence="2">Cytoplasm</location>
    </subcellularLocation>
</comment>
<comment type="miscellaneous">
    <text evidence="1">The active site is a conserved redox-active cysteine residue, the peroxidatic cysteine (C(P)), which makes the nucleophilic attack on the peroxide substrate. The peroxide oxidizes the C(P)-SH to cysteine sulfenic acid (C(P)-SOH), which then reacts with another cysteine residue, the resolving cysteine (C(R)), to form a disulfide bridge. The disulfide is subsequently reduced by an appropriate electron donor to complete the catalytic cycle. In this typical 2-Cys peroxiredoxin, C(R) is provided by the other dimeric subunit to form an intersubunit disulfide. The disulfide is subsequently reduced by AhpF.</text>
</comment>
<comment type="similarity">
    <text evidence="4">Belongs to the peroxiredoxin family. AhpC/Prx1 subfamily.</text>
</comment>
<organism>
    <name type="scientific">Staphylococcus aureus (strain USA300)</name>
    <dbReference type="NCBI Taxonomy" id="367830"/>
    <lineage>
        <taxon>Bacteria</taxon>
        <taxon>Bacillati</taxon>
        <taxon>Bacillota</taxon>
        <taxon>Bacilli</taxon>
        <taxon>Bacillales</taxon>
        <taxon>Staphylococcaceae</taxon>
        <taxon>Staphylococcus</taxon>
    </lineage>
</organism>
<feature type="chain" id="PRO_0000279760" description="Alkyl hydroperoxide reductase C">
    <location>
        <begin position="1"/>
        <end position="189"/>
    </location>
</feature>
<feature type="domain" description="Thioredoxin" evidence="3">
    <location>
        <begin position="2"/>
        <end position="159"/>
    </location>
</feature>
<feature type="active site" description="Cysteine sulfenic acid (-SOH) intermediate" evidence="1">
    <location>
        <position position="49"/>
    </location>
</feature>
<feature type="disulfide bond" description="Interchain (with C-168); in linked form" evidence="1">
    <location>
        <position position="49"/>
    </location>
</feature>
<feature type="disulfide bond" description="Interchain (with C-49); in linked form" evidence="1">
    <location>
        <position position="168"/>
    </location>
</feature>
<keyword id="KW-0049">Antioxidant</keyword>
<keyword id="KW-0963">Cytoplasm</keyword>
<keyword id="KW-1015">Disulfide bond</keyword>
<keyword id="KW-0560">Oxidoreductase</keyword>
<keyword id="KW-0575">Peroxidase</keyword>
<keyword id="KW-0676">Redox-active center</keyword>